<feature type="chain" id="PRO_0000251247" description="Transmembrane protein 121">
    <location>
        <begin position="1"/>
        <end position="312"/>
    </location>
</feature>
<feature type="transmembrane region" description="Helical" evidence="2">
    <location>
        <begin position="10"/>
        <end position="30"/>
    </location>
</feature>
<feature type="transmembrane region" description="Helical" evidence="2">
    <location>
        <begin position="43"/>
        <end position="63"/>
    </location>
</feature>
<feature type="transmembrane region" description="Helical" evidence="2">
    <location>
        <begin position="74"/>
        <end position="94"/>
    </location>
</feature>
<feature type="transmembrane region" description="Helical" evidence="2">
    <location>
        <begin position="111"/>
        <end position="131"/>
    </location>
</feature>
<feature type="transmembrane region" description="Helical" evidence="2">
    <location>
        <begin position="173"/>
        <end position="193"/>
    </location>
</feature>
<feature type="transmembrane region" description="Helical" evidence="2">
    <location>
        <begin position="219"/>
        <end position="239"/>
    </location>
</feature>
<feature type="region of interest" description="Disordered" evidence="3">
    <location>
        <begin position="291"/>
        <end position="312"/>
    </location>
</feature>
<reference key="1">
    <citation type="journal article" date="2002" name="Mech. Dev.">
        <title>Hole is a novel gene product expressed in the developing heart and brain.</title>
        <authorList>
            <person name="Nesset A.L."/>
            <person name="Bader D.M."/>
        </authorList>
    </citation>
    <scope>NUCLEOTIDE SEQUENCE [MRNA]</scope>
    <scope>DEVELOPMENTAL STAGE</scope>
    <source>
        <tissue>Embryonic heart</tissue>
    </source>
</reference>
<comment type="function">
    <text evidence="1">May play a role in MAPK signaling.</text>
</comment>
<comment type="subcellular location">
    <subcellularLocation>
        <location evidence="5">Membrane</location>
        <topology evidence="5">Multi-pass membrane protein</topology>
    </subcellularLocation>
    <text evidence="1">May localize to the plasma membrane.</text>
</comment>
<comment type="developmental stage">
    <text evidence="4">Expressed in the cardiac crescent and later in the myocardium in stages 4 to 25.</text>
</comment>
<comment type="similarity">
    <text evidence="5">Belongs to the TMEM121 family.</text>
</comment>
<proteinExistence type="evidence at transcript level"/>
<gene>
    <name type="primary">TMEM121</name>
    <name type="synonym">HOLE</name>
</gene>
<protein>
    <recommendedName>
        <fullName>Transmembrane protein 121</fullName>
    </recommendedName>
    <alternativeName>
        <fullName>Protein hole</fullName>
    </alternativeName>
</protein>
<dbReference type="EMBL" id="AF488728">
    <property type="protein sequence ID" value="AAM08318.1"/>
    <property type="molecule type" value="mRNA"/>
</dbReference>
<dbReference type="RefSeq" id="NP_989870.1">
    <property type="nucleotide sequence ID" value="NM_204539.2"/>
</dbReference>
<dbReference type="RefSeq" id="XP_015145726.1">
    <property type="nucleotide sequence ID" value="XM_015290240.1"/>
</dbReference>
<dbReference type="FunCoup" id="Q8QFN3">
    <property type="interactions" value="68"/>
</dbReference>
<dbReference type="STRING" id="9031.ENSGALP00000070792"/>
<dbReference type="PaxDb" id="9031-ENSGALP00000004345"/>
<dbReference type="Ensembl" id="ENSGALT00000116582">
    <property type="protein sequence ID" value="ENSGALP00000092826"/>
    <property type="gene ID" value="ENSGALG00000058436"/>
</dbReference>
<dbReference type="Ensembl" id="ENSGALT00000117396">
    <property type="protein sequence ID" value="ENSGALP00000092070"/>
    <property type="gene ID" value="ENSGALG00000058436"/>
</dbReference>
<dbReference type="Ensembl" id="ENSGALT00000122502">
    <property type="protein sequence ID" value="ENSGALP00000083344"/>
    <property type="gene ID" value="ENSGALG00000058436"/>
</dbReference>
<dbReference type="Ensembl" id="ENSGALT00000142977">
    <property type="protein sequence ID" value="ENSGALP00000075407"/>
    <property type="gene ID" value="ENSGALG00000058436"/>
</dbReference>
<dbReference type="Ensembl" id="ENSGALT00000150064">
    <property type="protein sequence ID" value="ENSGALP00000083339"/>
    <property type="gene ID" value="ENSGALG00000058436"/>
</dbReference>
<dbReference type="Ensembl" id="ENSGALT00000154165">
    <property type="protein sequence ID" value="ENSGALP00000076154"/>
    <property type="gene ID" value="ENSGALG00000058436"/>
</dbReference>
<dbReference type="Ensembl" id="ENSGALT00010031484.1">
    <property type="protein sequence ID" value="ENSGALP00010018384.1"/>
    <property type="gene ID" value="ENSGALG00010013137.1"/>
</dbReference>
<dbReference type="Ensembl" id="ENSGALT00010031486.1">
    <property type="protein sequence ID" value="ENSGALP00010018386.1"/>
    <property type="gene ID" value="ENSGALG00010013137.1"/>
</dbReference>
<dbReference type="Ensembl" id="ENSGALT00010031488.1">
    <property type="protein sequence ID" value="ENSGALP00010018388.1"/>
    <property type="gene ID" value="ENSGALG00010013137.1"/>
</dbReference>
<dbReference type="Ensembl" id="ENSGALT00010031491.1">
    <property type="protein sequence ID" value="ENSGALP00010018390.1"/>
    <property type="gene ID" value="ENSGALG00010013137.1"/>
</dbReference>
<dbReference type="Ensembl" id="ENSGALT00010031493.1">
    <property type="protein sequence ID" value="ENSGALP00010018393.1"/>
    <property type="gene ID" value="ENSGALG00010013137.1"/>
</dbReference>
<dbReference type="Ensembl" id="ENSGALT00010031494.1">
    <property type="protein sequence ID" value="ENSGALP00010018394.1"/>
    <property type="gene ID" value="ENSGALG00010013137.1"/>
</dbReference>
<dbReference type="Ensembl" id="ENSGALT00010031496.1">
    <property type="protein sequence ID" value="ENSGALP00010018395.1"/>
    <property type="gene ID" value="ENSGALG00010013137.1"/>
</dbReference>
<dbReference type="Ensembl" id="ENSGALT00010031502.1">
    <property type="protein sequence ID" value="ENSGALP00010018399.1"/>
    <property type="gene ID" value="ENSGALG00010013137.1"/>
</dbReference>
<dbReference type="GeneID" id="395216"/>
<dbReference type="KEGG" id="gga:395216"/>
<dbReference type="CTD" id="80757"/>
<dbReference type="VEuPathDB" id="HostDB:geneid_395216"/>
<dbReference type="eggNOG" id="ENOG502S0WC">
    <property type="taxonomic scope" value="Eukaryota"/>
</dbReference>
<dbReference type="GeneTree" id="ENSGT00390000003866"/>
<dbReference type="HOGENOM" id="CLU_076106_0_0_1"/>
<dbReference type="InParanoid" id="Q8QFN3"/>
<dbReference type="OMA" id="QATLWEP"/>
<dbReference type="OrthoDB" id="9926693at2759"/>
<dbReference type="PhylomeDB" id="Q8QFN3"/>
<dbReference type="TreeFam" id="TF328726"/>
<dbReference type="PRO" id="PR:Q8QFN3"/>
<dbReference type="Proteomes" id="UP000000539">
    <property type="component" value="Chromosome 8"/>
</dbReference>
<dbReference type="Bgee" id="ENSGALG00000054831">
    <property type="expression patterns" value="Expressed in heart and 8 other cell types or tissues"/>
</dbReference>
<dbReference type="GO" id="GO:0016020">
    <property type="term" value="C:membrane"/>
    <property type="evidence" value="ECO:0007669"/>
    <property type="project" value="UniProtKB-SubCell"/>
</dbReference>
<dbReference type="InterPro" id="IPR032776">
    <property type="entry name" value="CECR6/TMEM121"/>
</dbReference>
<dbReference type="InterPro" id="IPR042314">
    <property type="entry name" value="TMEM121"/>
</dbReference>
<dbReference type="PANTHER" id="PTHR31046">
    <property type="entry name" value="TRANSMEMBRANE PROTEIN 121"/>
    <property type="match status" value="1"/>
</dbReference>
<dbReference type="PANTHER" id="PTHR31046:SF0">
    <property type="entry name" value="TRANSMEMBRANE PROTEIN 121"/>
    <property type="match status" value="1"/>
</dbReference>
<dbReference type="Pfam" id="PF14997">
    <property type="entry name" value="CECR6_TMEM121"/>
    <property type="match status" value="1"/>
</dbReference>
<accession>Q8QFN3</accession>
<organism>
    <name type="scientific">Gallus gallus</name>
    <name type="common">Chicken</name>
    <dbReference type="NCBI Taxonomy" id="9031"/>
    <lineage>
        <taxon>Eukaryota</taxon>
        <taxon>Metazoa</taxon>
        <taxon>Chordata</taxon>
        <taxon>Craniata</taxon>
        <taxon>Vertebrata</taxon>
        <taxon>Euteleostomi</taxon>
        <taxon>Archelosauria</taxon>
        <taxon>Archosauria</taxon>
        <taxon>Dinosauria</taxon>
        <taxon>Saurischia</taxon>
        <taxon>Theropoda</taxon>
        <taxon>Coelurosauria</taxon>
        <taxon>Aves</taxon>
        <taxon>Neognathae</taxon>
        <taxon>Galloanserae</taxon>
        <taxon>Galliformes</taxon>
        <taxon>Phasianidae</taxon>
        <taxon>Phasianinae</taxon>
        <taxon>Gallus</taxon>
    </lineage>
</organism>
<keyword id="KW-0472">Membrane</keyword>
<keyword id="KW-1185">Reference proteome</keyword>
<keyword id="KW-0812">Transmembrane</keyword>
<keyword id="KW-1133">Transmembrane helix</keyword>
<sequence>MVLPPPDKRHVCLTTIVIMTSMAFMDAYLVEQNQGPRKIGVCIIVLVGDICFLIVLRYVAVWVGAEVKTAKRGYAMILWFLYIFVLEIKLYFIFQNYKADKKNLETVARKALTLLLSICVPGLYLVLVALDSMEYIRTFRKKEDLRGRLFWVALDLLDILDIQANLWEPHRTGLPIWAEGLMFFYCYILLLILPCVSLSEISMQGEHIAPQKMMLYPVLSLVTINIVTIFIRAINMVLFQDSRVSTIFIGKNIIAIATKACTFLEYKRQVKEFPQNAIALELQQNSLSHNQTLHSTQGIPHEPSPTSEILDT</sequence>
<name>TM121_CHICK</name>
<evidence type="ECO:0000250" key="1"/>
<evidence type="ECO:0000255" key="2"/>
<evidence type="ECO:0000256" key="3">
    <source>
        <dbReference type="SAM" id="MobiDB-lite"/>
    </source>
</evidence>
<evidence type="ECO:0000269" key="4">
    <source>
    </source>
</evidence>
<evidence type="ECO:0000305" key="5"/>